<reference key="1">
    <citation type="journal article" date="2000" name="Nature">
        <title>Sequence and analysis of chromosome 3 of the plant Arabidopsis thaliana.</title>
        <authorList>
            <person name="Salanoubat M."/>
            <person name="Lemcke K."/>
            <person name="Rieger M."/>
            <person name="Ansorge W."/>
            <person name="Unseld M."/>
            <person name="Fartmann B."/>
            <person name="Valle G."/>
            <person name="Bloecker H."/>
            <person name="Perez-Alonso M."/>
            <person name="Obermaier B."/>
            <person name="Delseny M."/>
            <person name="Boutry M."/>
            <person name="Grivell L.A."/>
            <person name="Mache R."/>
            <person name="Puigdomenech P."/>
            <person name="De Simone V."/>
            <person name="Choisne N."/>
            <person name="Artiguenave F."/>
            <person name="Robert C."/>
            <person name="Brottier P."/>
            <person name="Wincker P."/>
            <person name="Cattolico L."/>
            <person name="Weissenbach J."/>
            <person name="Saurin W."/>
            <person name="Quetier F."/>
            <person name="Schaefer M."/>
            <person name="Mueller-Auer S."/>
            <person name="Gabel C."/>
            <person name="Fuchs M."/>
            <person name="Benes V."/>
            <person name="Wurmbach E."/>
            <person name="Drzonek H."/>
            <person name="Erfle H."/>
            <person name="Jordan N."/>
            <person name="Bangert S."/>
            <person name="Wiedelmann R."/>
            <person name="Kranz H."/>
            <person name="Voss H."/>
            <person name="Holland R."/>
            <person name="Brandt P."/>
            <person name="Nyakatura G."/>
            <person name="Vezzi A."/>
            <person name="D'Angelo M."/>
            <person name="Pallavicini A."/>
            <person name="Toppo S."/>
            <person name="Simionati B."/>
            <person name="Conrad A."/>
            <person name="Hornischer K."/>
            <person name="Kauer G."/>
            <person name="Loehnert T.-H."/>
            <person name="Nordsiek G."/>
            <person name="Reichelt J."/>
            <person name="Scharfe M."/>
            <person name="Schoen O."/>
            <person name="Bargues M."/>
            <person name="Terol J."/>
            <person name="Climent J."/>
            <person name="Navarro P."/>
            <person name="Collado C."/>
            <person name="Perez-Perez A."/>
            <person name="Ottenwaelder B."/>
            <person name="Duchemin D."/>
            <person name="Cooke R."/>
            <person name="Laudie M."/>
            <person name="Berger-Llauro C."/>
            <person name="Purnelle B."/>
            <person name="Masuy D."/>
            <person name="de Haan M."/>
            <person name="Maarse A.C."/>
            <person name="Alcaraz J.-P."/>
            <person name="Cottet A."/>
            <person name="Casacuberta E."/>
            <person name="Monfort A."/>
            <person name="Argiriou A."/>
            <person name="Flores M."/>
            <person name="Liguori R."/>
            <person name="Vitale D."/>
            <person name="Mannhaupt G."/>
            <person name="Haase D."/>
            <person name="Schoof H."/>
            <person name="Rudd S."/>
            <person name="Zaccaria P."/>
            <person name="Mewes H.-W."/>
            <person name="Mayer K.F.X."/>
            <person name="Kaul S."/>
            <person name="Town C.D."/>
            <person name="Koo H.L."/>
            <person name="Tallon L.J."/>
            <person name="Jenkins J."/>
            <person name="Rooney T."/>
            <person name="Rizzo M."/>
            <person name="Walts A."/>
            <person name="Utterback T."/>
            <person name="Fujii C.Y."/>
            <person name="Shea T.P."/>
            <person name="Creasy T.H."/>
            <person name="Haas B."/>
            <person name="Maiti R."/>
            <person name="Wu D."/>
            <person name="Peterson J."/>
            <person name="Van Aken S."/>
            <person name="Pai G."/>
            <person name="Militscher J."/>
            <person name="Sellers P."/>
            <person name="Gill J.E."/>
            <person name="Feldblyum T.V."/>
            <person name="Preuss D."/>
            <person name="Lin X."/>
            <person name="Nierman W.C."/>
            <person name="Salzberg S.L."/>
            <person name="White O."/>
            <person name="Venter J.C."/>
            <person name="Fraser C.M."/>
            <person name="Kaneko T."/>
            <person name="Nakamura Y."/>
            <person name="Sato S."/>
            <person name="Kato T."/>
            <person name="Asamizu E."/>
            <person name="Sasamoto S."/>
            <person name="Kimura T."/>
            <person name="Idesawa K."/>
            <person name="Kawashima K."/>
            <person name="Kishida Y."/>
            <person name="Kiyokawa C."/>
            <person name="Kohara M."/>
            <person name="Matsumoto M."/>
            <person name="Matsuno A."/>
            <person name="Muraki A."/>
            <person name="Nakayama S."/>
            <person name="Nakazaki N."/>
            <person name="Shinpo S."/>
            <person name="Takeuchi C."/>
            <person name="Wada T."/>
            <person name="Watanabe A."/>
            <person name="Yamada M."/>
            <person name="Yasuda M."/>
            <person name="Tabata S."/>
        </authorList>
    </citation>
    <scope>NUCLEOTIDE SEQUENCE [LARGE SCALE GENOMIC DNA]</scope>
    <source>
        <strain>cv. Columbia</strain>
    </source>
</reference>
<reference key="2">
    <citation type="journal article" date="2017" name="Plant J.">
        <title>Araport11: a complete reannotation of the Arabidopsis thaliana reference genome.</title>
        <authorList>
            <person name="Cheng C.Y."/>
            <person name="Krishnakumar V."/>
            <person name="Chan A.P."/>
            <person name="Thibaud-Nissen F."/>
            <person name="Schobel S."/>
            <person name="Town C.D."/>
        </authorList>
    </citation>
    <scope>GENOME REANNOTATION</scope>
    <source>
        <strain>cv. Columbia</strain>
    </source>
</reference>
<reference key="3">
    <citation type="journal article" date="2003" name="Science">
        <title>Empirical analysis of transcriptional activity in the Arabidopsis genome.</title>
        <authorList>
            <person name="Yamada K."/>
            <person name="Lim J."/>
            <person name="Dale J.M."/>
            <person name="Chen H."/>
            <person name="Shinn P."/>
            <person name="Palm C.J."/>
            <person name="Southwick A.M."/>
            <person name="Wu H.C."/>
            <person name="Kim C.J."/>
            <person name="Nguyen M."/>
            <person name="Pham P.K."/>
            <person name="Cheuk R.F."/>
            <person name="Karlin-Newmann G."/>
            <person name="Liu S.X."/>
            <person name="Lam B."/>
            <person name="Sakano H."/>
            <person name="Wu T."/>
            <person name="Yu G."/>
            <person name="Miranda M."/>
            <person name="Quach H.L."/>
            <person name="Tripp M."/>
            <person name="Chang C.H."/>
            <person name="Lee J.M."/>
            <person name="Toriumi M.J."/>
            <person name="Chan M.M."/>
            <person name="Tang C.C."/>
            <person name="Onodera C.S."/>
            <person name="Deng J.M."/>
            <person name="Akiyama K."/>
            <person name="Ansari Y."/>
            <person name="Arakawa T."/>
            <person name="Banh J."/>
            <person name="Banno F."/>
            <person name="Bowser L."/>
            <person name="Brooks S.Y."/>
            <person name="Carninci P."/>
            <person name="Chao Q."/>
            <person name="Choy N."/>
            <person name="Enju A."/>
            <person name="Goldsmith A.D."/>
            <person name="Gurjal M."/>
            <person name="Hansen N.F."/>
            <person name="Hayashizaki Y."/>
            <person name="Johnson-Hopson C."/>
            <person name="Hsuan V.W."/>
            <person name="Iida K."/>
            <person name="Karnes M."/>
            <person name="Khan S."/>
            <person name="Koesema E."/>
            <person name="Ishida J."/>
            <person name="Jiang P.X."/>
            <person name="Jones T."/>
            <person name="Kawai J."/>
            <person name="Kamiya A."/>
            <person name="Meyers C."/>
            <person name="Nakajima M."/>
            <person name="Narusaka M."/>
            <person name="Seki M."/>
            <person name="Sakurai T."/>
            <person name="Satou M."/>
            <person name="Tamse R."/>
            <person name="Vaysberg M."/>
            <person name="Wallender E.K."/>
            <person name="Wong C."/>
            <person name="Yamamura Y."/>
            <person name="Yuan S."/>
            <person name="Shinozaki K."/>
            <person name="Davis R.W."/>
            <person name="Theologis A."/>
            <person name="Ecker J.R."/>
        </authorList>
    </citation>
    <scope>NUCLEOTIDE SEQUENCE [LARGE SCALE MRNA]</scope>
    <source>
        <strain>cv. Columbia</strain>
    </source>
</reference>
<reference key="4">
    <citation type="submission" date="2006-07" db="EMBL/GenBank/DDBJ databases">
        <title>Large-scale analysis of RIKEN Arabidopsis full-length (RAFL) cDNAs.</title>
        <authorList>
            <person name="Totoki Y."/>
            <person name="Seki M."/>
            <person name="Ishida J."/>
            <person name="Nakajima M."/>
            <person name="Enju A."/>
            <person name="Kamiya A."/>
            <person name="Narusaka M."/>
            <person name="Shin-i T."/>
            <person name="Nakagawa M."/>
            <person name="Sakamoto N."/>
            <person name="Oishi K."/>
            <person name="Kohara Y."/>
            <person name="Kobayashi M."/>
            <person name="Toyoda A."/>
            <person name="Sakaki Y."/>
            <person name="Sakurai T."/>
            <person name="Iida K."/>
            <person name="Akiyama K."/>
            <person name="Satou M."/>
            <person name="Toyoda T."/>
            <person name="Konagaya A."/>
            <person name="Carninci P."/>
            <person name="Kawai J."/>
            <person name="Hayashizaki Y."/>
            <person name="Shinozaki K."/>
        </authorList>
    </citation>
    <scope>NUCLEOTIDE SEQUENCE [LARGE SCALE MRNA]</scope>
    <source>
        <strain>cv. Columbia</strain>
    </source>
</reference>
<reference key="5">
    <citation type="journal article" date="2003" name="Nat. Cell Biol.">
        <title>EB1 reveals mobile microtubule nucleation sites in Arabidopsis.</title>
        <authorList>
            <person name="Chan J."/>
            <person name="Calder G.M."/>
            <person name="Doonan J.H."/>
            <person name="Lloyd C.W."/>
        </authorList>
    </citation>
    <scope>FUNCTION</scope>
    <scope>SUBCELLULAR LOCATION</scope>
</reference>
<reference key="6">
    <citation type="journal article" date="2005" name="Plant Cell">
        <title>Localization of the microtubule end binding protein EB1 reveals alternative pathways of spindle development in Arabidopsis suspension cells.</title>
        <authorList>
            <person name="Chan J."/>
            <person name="Calder G."/>
            <person name="Fox S."/>
            <person name="Lloyd C."/>
        </authorList>
    </citation>
    <scope>SUBCELLULAR LOCATION</scope>
</reference>
<reference key="7">
    <citation type="journal article" date="2008" name="Plant Cell">
        <title>The microtubule plus-end binding protein EB1 functions in root responses to touch and gravity signals in Arabidopsis.</title>
        <authorList>
            <person name="Bisgrove S.R."/>
            <person name="Lee Y.R."/>
            <person name="Liu B."/>
            <person name="Peters N.T."/>
            <person name="Kropf D.L."/>
        </authorList>
    </citation>
    <scope>SUBCELLULAR LOCATION</scope>
    <scope>DISRUPTION PHENOTYPE</scope>
    <source>
        <strain>cv. Wassilewskija</strain>
    </source>
</reference>
<reference key="8">
    <citation type="journal article" date="2008" name="Plant Physiol.">
        <title>Tobacco mosaic virus movement protein interacts with green fluorescent protein-tagged microtubule end-binding protein 1.</title>
        <authorList>
            <person name="Brandner K."/>
            <person name="Sambade A."/>
            <person name="Boutant E."/>
            <person name="Didier P."/>
            <person name="Mely Y."/>
            <person name="Ritzenthaler C."/>
            <person name="Heinlein M."/>
        </authorList>
    </citation>
    <scope>SUBCELLULAR LOCATION</scope>
    <scope>INTERACTION WITH TOBAMOVIRUS MOVEMENT PROTEIN</scope>
</reference>
<reference key="9">
    <citation type="journal article" date="2009" name="Plant Cell">
        <title>Arabidopsis cortical microtubules are initiated along, as well as branching from, existing microtubules.</title>
        <authorList>
            <person name="Chan J."/>
            <person name="Sambade A."/>
            <person name="Calder G."/>
            <person name="Lloyd C."/>
        </authorList>
    </citation>
    <scope>SUBCELLULAR LOCATION</scope>
</reference>
<reference key="10">
    <citation type="journal article" date="2010" name="J. Cell Sci.">
        <title>Nuclear-localized subtype of end-binding 1 protein regulates spindle organization in Arabidopsis.</title>
        <authorList>
            <person name="Komaki S."/>
            <person name="Abe T."/>
            <person name="Coutuer S."/>
            <person name="Inze D."/>
            <person name="Russinova E."/>
            <person name="Hashimoto T."/>
        </authorList>
    </citation>
    <scope>FUNCTION</scope>
    <scope>SUBUNIT</scope>
    <scope>SUBCELLULAR LOCATION</scope>
    <scope>TISSUE SPECIFICITY</scope>
    <scope>DISRUPTION PHENOTYPE</scope>
</reference>
<gene>
    <name type="primary">EB1A</name>
    <name type="ordered locus">At3g47690</name>
    <name type="ORF">T23J7.20</name>
</gene>
<sequence length="276" mass="31080">MATNIGMMDSAYFVGRNEILTWINDRLHLNLSRVEEAASGAVQCQMLDMTFPGVVPMHKVNFDAKNEYDMIQNYKVLQDVFNKLKITKPLEINRLVKGRPLDNLEFLQWLKRFCDSINGGIMNENYNPVERRSRNGKERSVKGSNKIPKSLQTNNNHPPPNSSSVGLSKASGPKSAKAAEVQALSKELVDLKISTDLLEKERDFYFSKLRDVEILCQTPELDDLPIVVAVKKILYATDANESALEDAQEYLNQSLGVEDDEAEGNGEQLEEEKTQA</sequence>
<evidence type="ECO:0000255" key="1">
    <source>
        <dbReference type="PROSITE-ProRule" id="PRU00044"/>
    </source>
</evidence>
<evidence type="ECO:0000255" key="2">
    <source>
        <dbReference type="PROSITE-ProRule" id="PRU00576"/>
    </source>
</evidence>
<evidence type="ECO:0000256" key="3">
    <source>
        <dbReference type="SAM" id="MobiDB-lite"/>
    </source>
</evidence>
<evidence type="ECO:0000269" key="4">
    <source>
    </source>
</evidence>
<evidence type="ECO:0000269" key="5">
    <source>
    </source>
</evidence>
<evidence type="ECO:0000269" key="6">
    <source>
    </source>
</evidence>
<evidence type="ECO:0000269" key="7">
    <source>
    </source>
</evidence>
<evidence type="ECO:0000305" key="8"/>
<evidence type="ECO:0000305" key="9">
    <source>
    </source>
</evidence>
<protein>
    <recommendedName>
        <fullName>Microtubule-associated protein RP/EB family member 1A</fullName>
    </recommendedName>
    <alternativeName>
        <fullName>APC-binding protein EB1A</fullName>
    </alternativeName>
    <alternativeName>
        <fullName>End-binding protein 1A</fullName>
        <shortName>AtEB1A</shortName>
    </alternativeName>
    <alternativeName>
        <fullName>Protein ATEB1 homolog 2</fullName>
        <shortName>AtEB1H2</shortName>
    </alternativeName>
</protein>
<feature type="chain" id="PRO_0000418410" description="Microtubule-associated protein RP/EB family member 1A">
    <location>
        <begin position="1"/>
        <end position="276"/>
    </location>
</feature>
<feature type="domain" description="Calponin-homology (CH)" evidence="1">
    <location>
        <begin position="13"/>
        <end position="115"/>
    </location>
</feature>
<feature type="domain" description="EB1 C-terminal" evidence="2">
    <location>
        <begin position="173"/>
        <end position="243"/>
    </location>
</feature>
<feature type="region of interest" description="Disordered" evidence="3">
    <location>
        <begin position="124"/>
        <end position="172"/>
    </location>
</feature>
<feature type="region of interest" description="Disordered" evidence="3">
    <location>
        <begin position="252"/>
        <end position="276"/>
    </location>
</feature>
<feature type="compositionally biased region" description="Basic and acidic residues" evidence="3">
    <location>
        <begin position="129"/>
        <end position="141"/>
    </location>
</feature>
<feature type="compositionally biased region" description="Low complexity" evidence="3">
    <location>
        <begin position="162"/>
        <end position="172"/>
    </location>
</feature>
<feature type="compositionally biased region" description="Acidic residues" evidence="3">
    <location>
        <begin position="257"/>
        <end position="270"/>
    </location>
</feature>
<keyword id="KW-0131">Cell cycle</keyword>
<keyword id="KW-0132">Cell division</keyword>
<keyword id="KW-0963">Cytoplasm</keyword>
<keyword id="KW-0206">Cytoskeleton</keyword>
<keyword id="KW-0945">Host-virus interaction</keyword>
<keyword id="KW-0493">Microtubule</keyword>
<keyword id="KW-0498">Mitosis</keyword>
<keyword id="KW-1185">Reference proteome</keyword>
<comment type="function">
    <text evidence="4 7">Binds to the plus end of microtubules and regulates the dynamics of the microtubule cytoskeleton. May be involved in anchoring microtubules to their nucleation sites and/or functioning as a reservoir for distribution to the growing end. In plants, microtubule minus ends are not necessarily severed from the nucleation site and transported to the plus end of a microtubule as part of the recycling process. May play a role in endomembrane organization during polarized growth of plant cells. Interacts with the tobamovirus movement protein (MP) and may play a role in the association of MP with the microtubule system during infection.</text>
</comment>
<comment type="subunit">
    <text evidence="6 7">Homodimer and heterodimer with EB1B. Interacts with tobamovirus movement protein.</text>
</comment>
<comment type="subcellular location">
    <subcellularLocation>
        <location>Cytoplasm</location>
        <location>Cytoskeleton</location>
        <location>Spindle pole</location>
    </subcellularLocation>
    <subcellularLocation>
        <location>Cytoplasm</location>
        <location>Cytoskeleton</location>
        <location>Phragmoplast</location>
    </subcellularLocation>
    <text>Localizes both to the plus ends of microtubules and to the sites of nucleation during division and interphase.</text>
</comment>
<comment type="tissue specificity">
    <text evidence="7">Highly expressed in guard cells of leaf stomata, pollen grains and pollen tubes. Expressed in young roots.</text>
</comment>
<comment type="domain">
    <text>Composed of two functionally independent domains. The N-terminal domain forms a hydrophobic cleft involved in microtubule binding and the C-terminal is involved in protein binding. In Arabidopsis thaliana, EB1A and EB1B possess an acidic C-terminal tail that has autoinhibitory function, but EB1C has a tail region with patches of basic amino acid residues required for nuclear targeting.</text>
</comment>
<comment type="disruption phenotype">
    <text evidence="5 7">No visible phenotype under normal growth conditions.</text>
</comment>
<comment type="miscellaneous">
    <text evidence="9">Plant microtubules behave differently from those of other eukaryotes in mitosis: they lack centrosomes and spindles are barrel-shaped with unfocused poles and no astral microtubules.</text>
</comment>
<comment type="similarity">
    <text evidence="8">Belongs to the MAPRE family.</text>
</comment>
<comment type="sequence caution" evidence="8">
    <conflict type="erroneous gene model prediction">
        <sequence resource="EMBL-CDS" id="CAB41852"/>
    </conflict>
</comment>
<name>EB1A_ARATH</name>
<organism>
    <name type="scientific">Arabidopsis thaliana</name>
    <name type="common">Mouse-ear cress</name>
    <dbReference type="NCBI Taxonomy" id="3702"/>
    <lineage>
        <taxon>Eukaryota</taxon>
        <taxon>Viridiplantae</taxon>
        <taxon>Streptophyta</taxon>
        <taxon>Embryophyta</taxon>
        <taxon>Tracheophyta</taxon>
        <taxon>Spermatophyta</taxon>
        <taxon>Magnoliopsida</taxon>
        <taxon>eudicotyledons</taxon>
        <taxon>Gunneridae</taxon>
        <taxon>Pentapetalae</taxon>
        <taxon>rosids</taxon>
        <taxon>malvids</taxon>
        <taxon>Brassicales</taxon>
        <taxon>Brassicaceae</taxon>
        <taxon>Camelineae</taxon>
        <taxon>Arabidopsis</taxon>
    </lineage>
</organism>
<accession>Q7XJ60</accession>
<accession>Q9STU4</accession>
<proteinExistence type="evidence at protein level"/>
<dbReference type="EMBL" id="AL049746">
    <property type="protein sequence ID" value="CAB41852.1"/>
    <property type="status" value="ALT_SEQ"/>
    <property type="molecule type" value="Genomic_DNA"/>
</dbReference>
<dbReference type="EMBL" id="CP002686">
    <property type="protein sequence ID" value="AEE78319.1"/>
    <property type="molecule type" value="Genomic_DNA"/>
</dbReference>
<dbReference type="EMBL" id="BT009707">
    <property type="protein sequence ID" value="AAP88341.1"/>
    <property type="molecule type" value="mRNA"/>
</dbReference>
<dbReference type="EMBL" id="AK227867">
    <property type="protein sequence ID" value="BAE99843.1"/>
    <property type="molecule type" value="mRNA"/>
</dbReference>
<dbReference type="PIR" id="T07708">
    <property type="entry name" value="T07708"/>
</dbReference>
<dbReference type="RefSeq" id="NP_190353.3">
    <property type="nucleotide sequence ID" value="NM_114637.4"/>
</dbReference>
<dbReference type="SMR" id="Q7XJ60"/>
<dbReference type="BioGRID" id="9243">
    <property type="interactions" value="3"/>
</dbReference>
<dbReference type="FunCoup" id="Q7XJ60">
    <property type="interactions" value="2619"/>
</dbReference>
<dbReference type="STRING" id="3702.Q7XJ60"/>
<dbReference type="PaxDb" id="3702-AT3G47690.1"/>
<dbReference type="ProteomicsDB" id="222044"/>
<dbReference type="DNASU" id="823923"/>
<dbReference type="EnsemblPlants" id="AT3G47690.1">
    <property type="protein sequence ID" value="AT3G47690.1"/>
    <property type="gene ID" value="AT3G47690"/>
</dbReference>
<dbReference type="GeneID" id="823923"/>
<dbReference type="Gramene" id="AT3G47690.1">
    <property type="protein sequence ID" value="AT3G47690.1"/>
    <property type="gene ID" value="AT3G47690"/>
</dbReference>
<dbReference type="KEGG" id="ath:AT3G47690"/>
<dbReference type="Araport" id="AT3G47690"/>
<dbReference type="TAIR" id="AT3G47690">
    <property type="gene designation" value="EB1A"/>
</dbReference>
<dbReference type="eggNOG" id="KOG3000">
    <property type="taxonomic scope" value="Eukaryota"/>
</dbReference>
<dbReference type="HOGENOM" id="CLU_041744_0_1_1"/>
<dbReference type="InParanoid" id="Q7XJ60"/>
<dbReference type="OMA" id="TVLEHEY"/>
<dbReference type="PhylomeDB" id="Q7XJ60"/>
<dbReference type="CD-CODE" id="33FCD62D">
    <property type="entry name" value="Centrosome"/>
</dbReference>
<dbReference type="PRO" id="PR:Q7XJ60"/>
<dbReference type="Proteomes" id="UP000006548">
    <property type="component" value="Chromosome 3"/>
</dbReference>
<dbReference type="ExpressionAtlas" id="Q7XJ60">
    <property type="expression patterns" value="baseline and differential"/>
</dbReference>
<dbReference type="GO" id="GO:0010005">
    <property type="term" value="C:cortical microtubule, transverse to long axis"/>
    <property type="evidence" value="ECO:0000314"/>
    <property type="project" value="TAIR"/>
</dbReference>
<dbReference type="GO" id="GO:0005815">
    <property type="term" value="C:microtubule organizing center"/>
    <property type="evidence" value="ECO:0000314"/>
    <property type="project" value="TAIR"/>
</dbReference>
<dbReference type="GO" id="GO:0009524">
    <property type="term" value="C:phragmoplast"/>
    <property type="evidence" value="ECO:0000314"/>
    <property type="project" value="TAIR"/>
</dbReference>
<dbReference type="GO" id="GO:0009574">
    <property type="term" value="C:preprophase band"/>
    <property type="evidence" value="ECO:0000314"/>
    <property type="project" value="TAIR"/>
</dbReference>
<dbReference type="GO" id="GO:0005876">
    <property type="term" value="C:spindle microtubule"/>
    <property type="evidence" value="ECO:0000314"/>
    <property type="project" value="TAIR"/>
</dbReference>
<dbReference type="GO" id="GO:0000922">
    <property type="term" value="C:spindle pole"/>
    <property type="evidence" value="ECO:0007669"/>
    <property type="project" value="UniProtKB-SubCell"/>
</dbReference>
<dbReference type="GO" id="GO:0008017">
    <property type="term" value="F:microtubule binding"/>
    <property type="evidence" value="ECO:0000314"/>
    <property type="project" value="TAIR"/>
</dbReference>
<dbReference type="GO" id="GO:0051301">
    <property type="term" value="P:cell division"/>
    <property type="evidence" value="ECO:0007669"/>
    <property type="project" value="UniProtKB-KW"/>
</dbReference>
<dbReference type="GO" id="GO:0001578">
    <property type="term" value="P:microtubule bundle formation"/>
    <property type="evidence" value="ECO:0000316"/>
    <property type="project" value="TAIR"/>
</dbReference>
<dbReference type="GO" id="GO:0009652">
    <property type="term" value="P:thigmotropism"/>
    <property type="evidence" value="ECO:0000315"/>
    <property type="project" value="TAIR"/>
</dbReference>
<dbReference type="FunFam" id="1.20.5.1430:FF:000004">
    <property type="entry name" value="Microtubule-associated protein RP/EB family member 1B"/>
    <property type="match status" value="1"/>
</dbReference>
<dbReference type="FunFam" id="1.10.418.10:FF:000028">
    <property type="entry name" value="RP/EB family microtubule-associated protein"/>
    <property type="match status" value="1"/>
</dbReference>
<dbReference type="Gene3D" id="1.20.5.1430">
    <property type="match status" value="1"/>
</dbReference>
<dbReference type="Gene3D" id="1.10.418.10">
    <property type="entry name" value="Calponin-like domain"/>
    <property type="match status" value="1"/>
</dbReference>
<dbReference type="InterPro" id="IPR001715">
    <property type="entry name" value="CH_dom"/>
</dbReference>
<dbReference type="InterPro" id="IPR036872">
    <property type="entry name" value="CH_dom_sf"/>
</dbReference>
<dbReference type="InterPro" id="IPR004953">
    <property type="entry name" value="EB1_C"/>
</dbReference>
<dbReference type="InterPro" id="IPR036133">
    <property type="entry name" value="EB1_C_sf"/>
</dbReference>
<dbReference type="InterPro" id="IPR027328">
    <property type="entry name" value="MAPRE"/>
</dbReference>
<dbReference type="PANTHER" id="PTHR10623">
    <property type="entry name" value="MICROTUBULE-ASSOCIATED PROTEIN RP/EB FAMILY MEMBER"/>
    <property type="match status" value="1"/>
</dbReference>
<dbReference type="Pfam" id="PF00307">
    <property type="entry name" value="CH"/>
    <property type="match status" value="1"/>
</dbReference>
<dbReference type="Pfam" id="PF03271">
    <property type="entry name" value="EB1"/>
    <property type="match status" value="1"/>
</dbReference>
<dbReference type="SUPFAM" id="SSF47576">
    <property type="entry name" value="Calponin-homology domain, CH-domain"/>
    <property type="match status" value="1"/>
</dbReference>
<dbReference type="SUPFAM" id="SSF140612">
    <property type="entry name" value="EB1 dimerisation domain-like"/>
    <property type="match status" value="1"/>
</dbReference>
<dbReference type="PROSITE" id="PS50021">
    <property type="entry name" value="CH"/>
    <property type="match status" value="1"/>
</dbReference>
<dbReference type="PROSITE" id="PS51230">
    <property type="entry name" value="EB1_C"/>
    <property type="match status" value="1"/>
</dbReference>